<sequence length="201" mass="21977">MAGSFAQLARAADKARDTMLVPKTALETPPLEIHTLGADALRQPAQRIGKVNDQVRELARDMLRSMYTAKGIGLAAPQVAVYQQLLVIDLDLENAATPPLVLINPEITAASAGLDTYEEGCLSIPGVYLDVVRPTAIELSYRDEMGRPRKMKADGLMARCIQHEMDHLNGVLFVDRVTDQAGLQKELKENGFQSKHVQSVS</sequence>
<keyword id="KW-0378">Hydrolase</keyword>
<keyword id="KW-0408">Iron</keyword>
<keyword id="KW-0479">Metal-binding</keyword>
<keyword id="KW-0648">Protein biosynthesis</keyword>
<keyword id="KW-1185">Reference proteome</keyword>
<organism>
    <name type="scientific">Synechococcus sp. (strain CC9902)</name>
    <dbReference type="NCBI Taxonomy" id="316279"/>
    <lineage>
        <taxon>Bacteria</taxon>
        <taxon>Bacillati</taxon>
        <taxon>Cyanobacteriota</taxon>
        <taxon>Cyanophyceae</taxon>
        <taxon>Synechococcales</taxon>
        <taxon>Synechococcaceae</taxon>
        <taxon>Synechococcus</taxon>
    </lineage>
</organism>
<accession>Q3AZU8</accession>
<evidence type="ECO:0000255" key="1">
    <source>
        <dbReference type="HAMAP-Rule" id="MF_00163"/>
    </source>
</evidence>
<reference key="1">
    <citation type="submission" date="2005-08" db="EMBL/GenBank/DDBJ databases">
        <title>Complete sequence of Synechococcus sp. CC9902.</title>
        <authorList>
            <person name="Copeland A."/>
            <person name="Lucas S."/>
            <person name="Lapidus A."/>
            <person name="Barry K."/>
            <person name="Detter J.C."/>
            <person name="Glavina T."/>
            <person name="Hammon N."/>
            <person name="Israni S."/>
            <person name="Pitluck S."/>
            <person name="Martinez M."/>
            <person name="Schmutz J."/>
            <person name="Larimer F."/>
            <person name="Land M."/>
            <person name="Kyrpides N."/>
            <person name="Ivanova N."/>
            <person name="Richardson P."/>
        </authorList>
    </citation>
    <scope>NUCLEOTIDE SEQUENCE [LARGE SCALE GENOMIC DNA]</scope>
    <source>
        <strain>CC9902</strain>
    </source>
</reference>
<gene>
    <name evidence="1" type="primary">def</name>
    <name type="ordered locus">Syncc9902_0409</name>
</gene>
<feature type="chain" id="PRO_0000301117" description="Peptide deformylase">
    <location>
        <begin position="1"/>
        <end position="201"/>
    </location>
</feature>
<feature type="active site" evidence="1">
    <location>
        <position position="164"/>
    </location>
</feature>
<feature type="binding site" evidence="1">
    <location>
        <position position="121"/>
    </location>
    <ligand>
        <name>Fe cation</name>
        <dbReference type="ChEBI" id="CHEBI:24875"/>
    </ligand>
</feature>
<feature type="binding site" evidence="1">
    <location>
        <position position="163"/>
    </location>
    <ligand>
        <name>Fe cation</name>
        <dbReference type="ChEBI" id="CHEBI:24875"/>
    </ligand>
</feature>
<feature type="binding site" evidence="1">
    <location>
        <position position="167"/>
    </location>
    <ligand>
        <name>Fe cation</name>
        <dbReference type="ChEBI" id="CHEBI:24875"/>
    </ligand>
</feature>
<comment type="function">
    <text evidence="1">Removes the formyl group from the N-terminal Met of newly synthesized proteins. Requires at least a dipeptide for an efficient rate of reaction. N-terminal L-methionine is a prerequisite for activity but the enzyme has broad specificity at other positions.</text>
</comment>
<comment type="catalytic activity">
    <reaction evidence="1">
        <text>N-terminal N-formyl-L-methionyl-[peptide] + H2O = N-terminal L-methionyl-[peptide] + formate</text>
        <dbReference type="Rhea" id="RHEA:24420"/>
        <dbReference type="Rhea" id="RHEA-COMP:10639"/>
        <dbReference type="Rhea" id="RHEA-COMP:10640"/>
        <dbReference type="ChEBI" id="CHEBI:15377"/>
        <dbReference type="ChEBI" id="CHEBI:15740"/>
        <dbReference type="ChEBI" id="CHEBI:49298"/>
        <dbReference type="ChEBI" id="CHEBI:64731"/>
        <dbReference type="EC" id="3.5.1.88"/>
    </reaction>
</comment>
<comment type="cofactor">
    <cofactor evidence="1">
        <name>Fe(2+)</name>
        <dbReference type="ChEBI" id="CHEBI:29033"/>
    </cofactor>
    <text evidence="1">Binds 1 Fe(2+) ion.</text>
</comment>
<comment type="similarity">
    <text evidence="1">Belongs to the polypeptide deformylase family.</text>
</comment>
<name>DEF_SYNS9</name>
<dbReference type="EC" id="3.5.1.88" evidence="1"/>
<dbReference type="EMBL" id="CP000097">
    <property type="protein sequence ID" value="ABB25379.1"/>
    <property type="molecule type" value="Genomic_DNA"/>
</dbReference>
<dbReference type="RefSeq" id="WP_011359234.1">
    <property type="nucleotide sequence ID" value="NC_007513.1"/>
</dbReference>
<dbReference type="SMR" id="Q3AZU8"/>
<dbReference type="STRING" id="316279.Syncc9902_0409"/>
<dbReference type="KEGG" id="sye:Syncc9902_0409"/>
<dbReference type="eggNOG" id="COG0242">
    <property type="taxonomic scope" value="Bacteria"/>
</dbReference>
<dbReference type="HOGENOM" id="CLU_061901_4_2_3"/>
<dbReference type="OrthoDB" id="9784988at2"/>
<dbReference type="Proteomes" id="UP000002712">
    <property type="component" value="Chromosome"/>
</dbReference>
<dbReference type="GO" id="GO:0046872">
    <property type="term" value="F:metal ion binding"/>
    <property type="evidence" value="ECO:0007669"/>
    <property type="project" value="UniProtKB-KW"/>
</dbReference>
<dbReference type="GO" id="GO:0042586">
    <property type="term" value="F:peptide deformylase activity"/>
    <property type="evidence" value="ECO:0007669"/>
    <property type="project" value="UniProtKB-UniRule"/>
</dbReference>
<dbReference type="GO" id="GO:0043686">
    <property type="term" value="P:co-translational protein modification"/>
    <property type="evidence" value="ECO:0007669"/>
    <property type="project" value="TreeGrafter"/>
</dbReference>
<dbReference type="GO" id="GO:0006412">
    <property type="term" value="P:translation"/>
    <property type="evidence" value="ECO:0007669"/>
    <property type="project" value="UniProtKB-UniRule"/>
</dbReference>
<dbReference type="CDD" id="cd00487">
    <property type="entry name" value="Pep_deformylase"/>
    <property type="match status" value="1"/>
</dbReference>
<dbReference type="FunFam" id="3.90.45.10:FF:000005">
    <property type="entry name" value="Peptide deformylase"/>
    <property type="match status" value="1"/>
</dbReference>
<dbReference type="Gene3D" id="3.90.45.10">
    <property type="entry name" value="Peptide deformylase"/>
    <property type="match status" value="1"/>
</dbReference>
<dbReference type="HAMAP" id="MF_00163">
    <property type="entry name" value="Pep_deformylase"/>
    <property type="match status" value="1"/>
</dbReference>
<dbReference type="InterPro" id="IPR023635">
    <property type="entry name" value="Peptide_deformylase"/>
</dbReference>
<dbReference type="InterPro" id="IPR036821">
    <property type="entry name" value="Peptide_deformylase_sf"/>
</dbReference>
<dbReference type="NCBIfam" id="TIGR00079">
    <property type="entry name" value="pept_deformyl"/>
    <property type="match status" value="1"/>
</dbReference>
<dbReference type="NCBIfam" id="NF001159">
    <property type="entry name" value="PRK00150.1-3"/>
    <property type="match status" value="1"/>
</dbReference>
<dbReference type="PANTHER" id="PTHR10458">
    <property type="entry name" value="PEPTIDE DEFORMYLASE"/>
    <property type="match status" value="1"/>
</dbReference>
<dbReference type="PANTHER" id="PTHR10458:SF22">
    <property type="entry name" value="PEPTIDE DEFORMYLASE"/>
    <property type="match status" value="1"/>
</dbReference>
<dbReference type="Pfam" id="PF01327">
    <property type="entry name" value="Pep_deformylase"/>
    <property type="match status" value="1"/>
</dbReference>
<dbReference type="PIRSF" id="PIRSF004749">
    <property type="entry name" value="Pep_def"/>
    <property type="match status" value="1"/>
</dbReference>
<dbReference type="PRINTS" id="PR01576">
    <property type="entry name" value="PDEFORMYLASE"/>
</dbReference>
<dbReference type="SUPFAM" id="SSF56420">
    <property type="entry name" value="Peptide deformylase"/>
    <property type="match status" value="1"/>
</dbReference>
<proteinExistence type="inferred from homology"/>
<protein>
    <recommendedName>
        <fullName evidence="1">Peptide deformylase</fullName>
        <shortName evidence="1">PDF</shortName>
        <ecNumber evidence="1">3.5.1.88</ecNumber>
    </recommendedName>
    <alternativeName>
        <fullName evidence="1">Polypeptide deformylase</fullName>
    </alternativeName>
</protein>